<proteinExistence type="evidence at protein level"/>
<organism>
    <name type="scientific">Pinus banksiana</name>
    <name type="common">Jack pine</name>
    <name type="synonym">Pinus divaricata</name>
    <dbReference type="NCBI Taxonomy" id="3353"/>
    <lineage>
        <taxon>Eukaryota</taxon>
        <taxon>Viridiplantae</taxon>
        <taxon>Streptophyta</taxon>
        <taxon>Embryophyta</taxon>
        <taxon>Tracheophyta</taxon>
        <taxon>Spermatophyta</taxon>
        <taxon>Pinopsida</taxon>
        <taxon>Pinidae</taxon>
        <taxon>Conifers I</taxon>
        <taxon>Pinales</taxon>
        <taxon>Pinaceae</taxon>
        <taxon>Pinus</taxon>
        <taxon>Pinus subgen. Pinus</taxon>
    </lineage>
</organism>
<gene>
    <name evidence="5" type="primary">TPS-(-)A/Bpin1</name>
</gene>
<protein>
    <recommendedName>
        <fullName evidence="5">(-)-alpha-pinene synthase 1, chloroplastic</fullName>
        <ecNumber evidence="4">4.2.3.119</ecNumber>
    </recommendedName>
    <alternativeName>
        <fullName evidence="5">(-)-beta-phellandrene synthase (-)alpha/betapin1, chloroplastic</fullName>
        <ecNumber evidence="4">4.2.3.52</ecNumber>
    </alternativeName>
    <alternativeName>
        <fullName evidence="5">(-)-beta-pinene synthase 1, chloroplastic</fullName>
        <ecNumber evidence="4">4.2.3.120</ecNumber>
    </alternativeName>
    <alternativeName>
        <fullName evidence="5">Terpene synthase (-)alpha/betapin1</fullName>
        <shortName evidence="5">PbTPS-(-)alpha/betapin1</shortName>
    </alternativeName>
</protein>
<reference key="1">
    <citation type="journal article" date="2013" name="BMC Plant Biol.">
        <title>Transcriptome resources and functional characterization of monoterpene synthases for two host species of the mountain pine beetle, lodgepole pine (Pinus contorta) and jack pine (Pinus banksiana).</title>
        <authorList>
            <person name="Hall D.E."/>
            <person name="Yuen M.M.S."/>
            <person name="Jancsik S."/>
            <person name="Quesada A.L."/>
            <person name="Dullat H.K."/>
            <person name="Li M."/>
            <person name="Henderson H."/>
            <person name="Arango-Velez A."/>
            <person name="Liao N.Y."/>
            <person name="Docking R.T."/>
            <person name="Chan S.K."/>
            <person name="Cooke J.E.K."/>
            <person name="Breuil C."/>
            <person name="Jones S.J.M."/>
            <person name="Keeling C.I."/>
            <person name="Bohlmann J."/>
        </authorList>
    </citation>
    <scope>NUCLEOTIDE SEQUENCE [MRNA]</scope>
    <scope>FUNCTION</scope>
    <scope>CATALYTIC ACTIVITY</scope>
    <scope>PATHWAY</scope>
</reference>
<sequence>MDLISVLPSASKSCVCLHKPLSSSTHKLKPFCKTIRILGMPRRWKFAGPSMSLSTVASDDDIQRRTGGYHSNLWNDDVIQFLSTPYGELAYRERAERLIDEVRDIFSSMSLEDGEFSDLIQRLWMVDNVERLGIDRHFKNEIKSALDYVYSYWSEKGIGCGTKSIITNLNSTALGFRTLRLHGYPVSADVLKHFRNQIGQFVSCPSETEEDIRSMVNLYRASLIAFPGEEVMEEAERFSEKYLKETLQKIPDCSLSREIGDVLEHGWHTNLPRLEARNYIDVFGQDTKNMESNRKTEKLLELAKLEFNIFQSIQETELESLLRWWNDSGSPQITFTRHRHVEYYTLASCIAFEPQHSGFRLGFAKACHIITVLDDMYDLFGTVDELKLFTAAIKRWDPSATDCLPQYMKGIYMMVYNTVNEMSAEAQKAQGRDTLNYARQAWEDCLDSYMQEAKWIATGFLPTFEEYLENGKVSSAHRVSALQPMLTMDIPFPPHILKEVDFPSNLNDLACAMLRLRGDTRCYQADRARGEETSCISCYMKDNPGATEEDALNRLNVMISGVIKELNWELLKPDSGVPISSKKINFDITRAFHYGYKYRDGYSVSSVETKSFVMRTLLEPVPL</sequence>
<accession>R9QMW1</accession>
<name>SPIN1_PINBN</name>
<keyword id="KW-0150">Chloroplast</keyword>
<keyword id="KW-0456">Lyase</keyword>
<keyword id="KW-0460">Magnesium</keyword>
<keyword id="KW-0479">Metal-binding</keyword>
<keyword id="KW-0934">Plastid</keyword>
<keyword id="KW-0809">Transit peptide</keyword>
<evidence type="ECO:0000250" key="1">
    <source>
        <dbReference type="UniProtKB" id="A0A1C9J6A7"/>
    </source>
</evidence>
<evidence type="ECO:0000250" key="2">
    <source>
        <dbReference type="UniProtKB" id="Q40577"/>
    </source>
</evidence>
<evidence type="ECO:0000255" key="3"/>
<evidence type="ECO:0000269" key="4">
    <source>
    </source>
</evidence>
<evidence type="ECO:0000303" key="5">
    <source>
    </source>
</evidence>
<evidence type="ECO:0000305" key="6"/>
<comment type="function">
    <text evidence="4">Monoterpene synthase (TPS) involved in the biosynthesis of monoterpene natural products included in conifer oleoresin secretions and volatile emissions; these compounds contribute to biotic and abiotic stress defense against herbivores and pathogens (PubMed:23679205). Catalyzes the conversion of (2E)-geranyl diphosphate (GPP) to (-)-alpha-pinene and (-)-beta-pinene, and, to a lower extent, to (-)-beta-phellandrene (PubMed:23679205).</text>
</comment>
<comment type="catalytic activity">
    <reaction evidence="4">
        <text>(2E)-geranyl diphosphate = (1S,5S)-alpha-pinene + diphosphate</text>
        <dbReference type="Rhea" id="RHEA:25488"/>
        <dbReference type="ChEBI" id="CHEBI:28660"/>
        <dbReference type="ChEBI" id="CHEBI:33019"/>
        <dbReference type="ChEBI" id="CHEBI:58057"/>
        <dbReference type="EC" id="4.2.3.119"/>
    </reaction>
    <physiologicalReaction direction="left-to-right" evidence="4">
        <dbReference type="Rhea" id="RHEA:25489"/>
    </physiologicalReaction>
</comment>
<comment type="catalytic activity">
    <reaction evidence="4">
        <text>(2E)-geranyl diphosphate = (1S,5S)-beta-pinene + diphosphate</text>
        <dbReference type="Rhea" id="RHEA:25496"/>
        <dbReference type="ChEBI" id="CHEBI:28359"/>
        <dbReference type="ChEBI" id="CHEBI:33019"/>
        <dbReference type="ChEBI" id="CHEBI:58057"/>
        <dbReference type="EC" id="4.2.3.120"/>
    </reaction>
    <physiologicalReaction direction="left-to-right" evidence="4">
        <dbReference type="Rhea" id="RHEA:25497"/>
    </physiologicalReaction>
</comment>
<comment type="catalytic activity">
    <reaction evidence="4">
        <text>(2E)-geranyl diphosphate = (-)-beta-phellandrene + diphosphate</text>
        <dbReference type="Rhea" id="RHEA:25492"/>
        <dbReference type="ChEBI" id="CHEBI:129"/>
        <dbReference type="ChEBI" id="CHEBI:33019"/>
        <dbReference type="ChEBI" id="CHEBI:58057"/>
        <dbReference type="EC" id="4.2.3.52"/>
    </reaction>
    <physiologicalReaction direction="left-to-right" evidence="4">
        <dbReference type="Rhea" id="RHEA:25493"/>
    </physiologicalReaction>
</comment>
<comment type="cofactor">
    <cofactor evidence="1">
        <name>Mg(2+)</name>
        <dbReference type="ChEBI" id="CHEBI:18420"/>
    </cofactor>
    <cofactor evidence="1">
        <name>Mn(2+)</name>
        <dbReference type="ChEBI" id="CHEBI:29035"/>
    </cofactor>
    <text evidence="1">Binds 3 Mg(2+) or Mn(2+) ions per subunit.</text>
</comment>
<comment type="pathway">
    <text evidence="4">Terpene metabolism; oleoresin biosynthesis.</text>
</comment>
<comment type="pathway">
    <text evidence="4">Secondary metabolite biosynthesis; terpenoid biosynthesis.</text>
</comment>
<comment type="subcellular location">
    <subcellularLocation>
        <location evidence="3">Plastid</location>
        <location evidence="3">Chloroplast</location>
    </subcellularLocation>
</comment>
<comment type="domain">
    <text evidence="6">The Asp-Asp-Xaa-Xaa-Asp/Glu (DDXXD/E) motif is important for the catalytic activity, presumably through binding to Mg(2+).</text>
</comment>
<comment type="similarity">
    <text evidence="6">Belongs to the terpene synthase family. Tpsd subfamily.</text>
</comment>
<feature type="transit peptide" description="Chloroplast" evidence="3">
    <location>
        <begin position="1"/>
        <end position="52"/>
    </location>
</feature>
<feature type="chain" id="PRO_0000455022" description="(-)-alpha-pinene synthase 1, chloroplastic">
    <location>
        <begin position="53"/>
        <end position="623"/>
    </location>
</feature>
<feature type="short sequence motif" description="DDXXD motif" evidence="6">
    <location>
        <begin position="374"/>
        <end position="378"/>
    </location>
</feature>
<feature type="binding site" evidence="2">
    <location>
        <position position="374"/>
    </location>
    <ligand>
        <name>Mg(2+)</name>
        <dbReference type="ChEBI" id="CHEBI:18420"/>
        <label>1</label>
    </ligand>
</feature>
<feature type="binding site" evidence="2">
    <location>
        <position position="374"/>
    </location>
    <ligand>
        <name>Mg(2+)</name>
        <dbReference type="ChEBI" id="CHEBI:18420"/>
        <label>2</label>
    </ligand>
</feature>
<feature type="binding site" evidence="2">
    <location>
        <position position="378"/>
    </location>
    <ligand>
        <name>Mg(2+)</name>
        <dbReference type="ChEBI" id="CHEBI:18420"/>
        <label>1</label>
    </ligand>
</feature>
<feature type="binding site" evidence="2">
    <location>
        <position position="378"/>
    </location>
    <ligand>
        <name>Mg(2+)</name>
        <dbReference type="ChEBI" id="CHEBI:18420"/>
        <label>2</label>
    </ligand>
</feature>
<feature type="binding site" evidence="2">
    <location>
        <position position="526"/>
    </location>
    <ligand>
        <name>Mg(2+)</name>
        <dbReference type="ChEBI" id="CHEBI:18420"/>
        <label>3</label>
    </ligand>
</feature>
<dbReference type="EC" id="4.2.3.119" evidence="4"/>
<dbReference type="EC" id="4.2.3.52" evidence="4"/>
<dbReference type="EC" id="4.2.3.120" evidence="4"/>
<dbReference type="EMBL" id="JQ240290">
    <property type="protein sequence ID" value="AFU73842.1"/>
    <property type="molecule type" value="mRNA"/>
</dbReference>
<dbReference type="SMR" id="R9QMW1"/>
<dbReference type="UniPathway" id="UPA00213"/>
<dbReference type="UniPathway" id="UPA00924"/>
<dbReference type="GO" id="GO:0009507">
    <property type="term" value="C:chloroplast"/>
    <property type="evidence" value="ECO:0007669"/>
    <property type="project" value="UniProtKB-SubCell"/>
</dbReference>
<dbReference type="GO" id="GO:0000287">
    <property type="term" value="F:magnesium ion binding"/>
    <property type="evidence" value="ECO:0007669"/>
    <property type="project" value="InterPro"/>
</dbReference>
<dbReference type="GO" id="GO:0050550">
    <property type="term" value="F:pinene synthase activity"/>
    <property type="evidence" value="ECO:0000314"/>
    <property type="project" value="UniProtKB"/>
</dbReference>
<dbReference type="GO" id="GO:0010333">
    <property type="term" value="F:terpene synthase activity"/>
    <property type="evidence" value="ECO:0000314"/>
    <property type="project" value="UniProtKB"/>
</dbReference>
<dbReference type="GO" id="GO:0018867">
    <property type="term" value="P:alpha-pinene metabolic process"/>
    <property type="evidence" value="ECO:0000314"/>
    <property type="project" value="UniProtKB"/>
</dbReference>
<dbReference type="GO" id="GO:0016102">
    <property type="term" value="P:diterpenoid biosynthetic process"/>
    <property type="evidence" value="ECO:0007669"/>
    <property type="project" value="InterPro"/>
</dbReference>
<dbReference type="GO" id="GO:0010597">
    <property type="term" value="P:green leaf volatile biosynthetic process"/>
    <property type="evidence" value="ECO:0000314"/>
    <property type="project" value="UniProtKB"/>
</dbReference>
<dbReference type="GO" id="GO:0016114">
    <property type="term" value="P:terpenoid biosynthetic process"/>
    <property type="evidence" value="ECO:0000314"/>
    <property type="project" value="UniProtKB"/>
</dbReference>
<dbReference type="CDD" id="cd00684">
    <property type="entry name" value="Terpene_cyclase_plant_C1"/>
    <property type="match status" value="1"/>
</dbReference>
<dbReference type="FunFam" id="1.50.10.130:FF:000004">
    <property type="entry name" value="Carene synthase, chloroplastic"/>
    <property type="match status" value="1"/>
</dbReference>
<dbReference type="FunFam" id="1.10.600.10:FF:000005">
    <property type="entry name" value="Ent-kaur-16-ene synthase, chloroplastic"/>
    <property type="match status" value="1"/>
</dbReference>
<dbReference type="Gene3D" id="1.10.600.10">
    <property type="entry name" value="Farnesyl Diphosphate Synthase"/>
    <property type="match status" value="1"/>
</dbReference>
<dbReference type="Gene3D" id="1.50.10.130">
    <property type="entry name" value="Terpene synthase, N-terminal domain"/>
    <property type="match status" value="1"/>
</dbReference>
<dbReference type="InterPro" id="IPR008949">
    <property type="entry name" value="Isoprenoid_synthase_dom_sf"/>
</dbReference>
<dbReference type="InterPro" id="IPR034741">
    <property type="entry name" value="Terpene_cyclase-like_1_C"/>
</dbReference>
<dbReference type="InterPro" id="IPR044814">
    <property type="entry name" value="Terpene_cyclase_plant_C1"/>
</dbReference>
<dbReference type="InterPro" id="IPR001906">
    <property type="entry name" value="Terpene_synth_N"/>
</dbReference>
<dbReference type="InterPro" id="IPR036965">
    <property type="entry name" value="Terpene_synth_N_sf"/>
</dbReference>
<dbReference type="InterPro" id="IPR050148">
    <property type="entry name" value="Terpene_synthase-like"/>
</dbReference>
<dbReference type="InterPro" id="IPR005630">
    <property type="entry name" value="Terpene_synthase_metal-bd"/>
</dbReference>
<dbReference type="InterPro" id="IPR008930">
    <property type="entry name" value="Terpenoid_cyclase/PrenylTrfase"/>
</dbReference>
<dbReference type="PANTHER" id="PTHR31225">
    <property type="entry name" value="OS04G0344100 PROTEIN-RELATED"/>
    <property type="match status" value="1"/>
</dbReference>
<dbReference type="PANTHER" id="PTHR31225:SF98">
    <property type="entry name" value="TERPENE SYNTHASE 9-RELATED"/>
    <property type="match status" value="1"/>
</dbReference>
<dbReference type="Pfam" id="PF01397">
    <property type="entry name" value="Terpene_synth"/>
    <property type="match status" value="1"/>
</dbReference>
<dbReference type="Pfam" id="PF03936">
    <property type="entry name" value="Terpene_synth_C"/>
    <property type="match status" value="1"/>
</dbReference>
<dbReference type="SFLD" id="SFLDS00005">
    <property type="entry name" value="Isoprenoid_Synthase_Type_I"/>
    <property type="match status" value="1"/>
</dbReference>
<dbReference type="SFLD" id="SFLDG01019">
    <property type="entry name" value="Terpene_Cyclase_Like_1_C_Termi"/>
    <property type="match status" value="1"/>
</dbReference>
<dbReference type="SFLD" id="SFLDG01014">
    <property type="entry name" value="Terpene_Cyclase_Like_1_N-term"/>
    <property type="match status" value="1"/>
</dbReference>
<dbReference type="SUPFAM" id="SSF48239">
    <property type="entry name" value="Terpenoid cyclases/Protein prenyltransferases"/>
    <property type="match status" value="1"/>
</dbReference>
<dbReference type="SUPFAM" id="SSF48576">
    <property type="entry name" value="Terpenoid synthases"/>
    <property type="match status" value="1"/>
</dbReference>